<accession>B8EK21</accession>
<name>RPOZ_METSB</name>
<keyword id="KW-0240">DNA-directed RNA polymerase</keyword>
<keyword id="KW-0548">Nucleotidyltransferase</keyword>
<keyword id="KW-1185">Reference proteome</keyword>
<keyword id="KW-0804">Transcription</keyword>
<keyword id="KW-0808">Transferase</keyword>
<reference key="1">
    <citation type="journal article" date="2010" name="J. Bacteriol.">
        <title>Complete genome sequence of the aerobic facultative methanotroph Methylocella silvestris BL2.</title>
        <authorList>
            <person name="Chen Y."/>
            <person name="Crombie A."/>
            <person name="Rahman M.T."/>
            <person name="Dedysh S.N."/>
            <person name="Liesack W."/>
            <person name="Stott M.B."/>
            <person name="Alam M."/>
            <person name="Theisen A.R."/>
            <person name="Murrell J.C."/>
            <person name="Dunfield P.F."/>
        </authorList>
    </citation>
    <scope>NUCLEOTIDE SEQUENCE [LARGE SCALE GENOMIC DNA]</scope>
    <source>
        <strain>DSM 15510 / CIP 108128 / LMG 27833 / NCIMB 13906 / BL2</strain>
    </source>
</reference>
<proteinExistence type="inferred from homology"/>
<protein>
    <recommendedName>
        <fullName evidence="1">DNA-directed RNA polymerase subunit omega</fullName>
        <shortName evidence="1">RNAP omega subunit</shortName>
        <ecNumber evidence="1">2.7.7.6</ecNumber>
    </recommendedName>
    <alternativeName>
        <fullName evidence="1">RNA polymerase omega subunit</fullName>
    </alternativeName>
    <alternativeName>
        <fullName evidence="1">Transcriptase subunit omega</fullName>
    </alternativeName>
</protein>
<dbReference type="EC" id="2.7.7.6" evidence="1"/>
<dbReference type="EMBL" id="CP001280">
    <property type="protein sequence ID" value="ACK49968.1"/>
    <property type="molecule type" value="Genomic_DNA"/>
</dbReference>
<dbReference type="RefSeq" id="WP_012590038.1">
    <property type="nucleotide sequence ID" value="NC_011666.1"/>
</dbReference>
<dbReference type="SMR" id="B8EK21"/>
<dbReference type="STRING" id="395965.Msil_0999"/>
<dbReference type="KEGG" id="msl:Msil_0999"/>
<dbReference type="eggNOG" id="COG1758">
    <property type="taxonomic scope" value="Bacteria"/>
</dbReference>
<dbReference type="HOGENOM" id="CLU_125406_2_0_5"/>
<dbReference type="OrthoDB" id="9796300at2"/>
<dbReference type="Proteomes" id="UP000002257">
    <property type="component" value="Chromosome"/>
</dbReference>
<dbReference type="GO" id="GO:0000428">
    <property type="term" value="C:DNA-directed RNA polymerase complex"/>
    <property type="evidence" value="ECO:0007669"/>
    <property type="project" value="UniProtKB-KW"/>
</dbReference>
<dbReference type="GO" id="GO:0003677">
    <property type="term" value="F:DNA binding"/>
    <property type="evidence" value="ECO:0007669"/>
    <property type="project" value="UniProtKB-UniRule"/>
</dbReference>
<dbReference type="GO" id="GO:0003899">
    <property type="term" value="F:DNA-directed RNA polymerase activity"/>
    <property type="evidence" value="ECO:0007669"/>
    <property type="project" value="UniProtKB-UniRule"/>
</dbReference>
<dbReference type="GO" id="GO:0006351">
    <property type="term" value="P:DNA-templated transcription"/>
    <property type="evidence" value="ECO:0007669"/>
    <property type="project" value="UniProtKB-UniRule"/>
</dbReference>
<dbReference type="Gene3D" id="3.90.940.10">
    <property type="match status" value="1"/>
</dbReference>
<dbReference type="HAMAP" id="MF_00366">
    <property type="entry name" value="RNApol_bact_RpoZ"/>
    <property type="match status" value="1"/>
</dbReference>
<dbReference type="InterPro" id="IPR003716">
    <property type="entry name" value="DNA-dir_RNA_pol_omega"/>
</dbReference>
<dbReference type="InterPro" id="IPR006110">
    <property type="entry name" value="Pol_omega/Rpo6/RPB6"/>
</dbReference>
<dbReference type="InterPro" id="IPR036161">
    <property type="entry name" value="RPB6/omega-like_sf"/>
</dbReference>
<dbReference type="NCBIfam" id="TIGR00690">
    <property type="entry name" value="rpoZ"/>
    <property type="match status" value="1"/>
</dbReference>
<dbReference type="PANTHER" id="PTHR34476">
    <property type="entry name" value="DNA-DIRECTED RNA POLYMERASE SUBUNIT OMEGA"/>
    <property type="match status" value="1"/>
</dbReference>
<dbReference type="PANTHER" id="PTHR34476:SF1">
    <property type="entry name" value="DNA-DIRECTED RNA POLYMERASE SUBUNIT OMEGA"/>
    <property type="match status" value="1"/>
</dbReference>
<dbReference type="Pfam" id="PF01192">
    <property type="entry name" value="RNA_pol_Rpb6"/>
    <property type="match status" value="1"/>
</dbReference>
<dbReference type="SMART" id="SM01409">
    <property type="entry name" value="RNA_pol_Rpb6"/>
    <property type="match status" value="1"/>
</dbReference>
<dbReference type="SUPFAM" id="SSF63562">
    <property type="entry name" value="RPB6/omega subunit-like"/>
    <property type="match status" value="1"/>
</dbReference>
<sequence>MARVTVEDCVDKVENRFELVLLASHRARMIAAGAPITIDRDNDKNPVVSLREIADSTLTPDDLKEDLIQSLQKHVEVDEPESEVVPALSSAPQNPEAIGDIQFDRMTEEDLLRGLEGLVPPAETEDDSE</sequence>
<evidence type="ECO:0000255" key="1">
    <source>
        <dbReference type="HAMAP-Rule" id="MF_00366"/>
    </source>
</evidence>
<evidence type="ECO:0000256" key="2">
    <source>
        <dbReference type="SAM" id="MobiDB-lite"/>
    </source>
</evidence>
<feature type="chain" id="PRO_1000194802" description="DNA-directed RNA polymerase subunit omega">
    <location>
        <begin position="1"/>
        <end position="129"/>
    </location>
</feature>
<feature type="region of interest" description="Disordered" evidence="2">
    <location>
        <begin position="77"/>
        <end position="98"/>
    </location>
</feature>
<gene>
    <name evidence="1" type="primary">rpoZ</name>
    <name type="ordered locus">Msil_0999</name>
</gene>
<comment type="function">
    <text evidence="1">Promotes RNA polymerase assembly. Latches the N- and C-terminal regions of the beta' subunit thereby facilitating its interaction with the beta and alpha subunits.</text>
</comment>
<comment type="catalytic activity">
    <reaction evidence="1">
        <text>RNA(n) + a ribonucleoside 5'-triphosphate = RNA(n+1) + diphosphate</text>
        <dbReference type="Rhea" id="RHEA:21248"/>
        <dbReference type="Rhea" id="RHEA-COMP:14527"/>
        <dbReference type="Rhea" id="RHEA-COMP:17342"/>
        <dbReference type="ChEBI" id="CHEBI:33019"/>
        <dbReference type="ChEBI" id="CHEBI:61557"/>
        <dbReference type="ChEBI" id="CHEBI:140395"/>
        <dbReference type="EC" id="2.7.7.6"/>
    </reaction>
</comment>
<comment type="subunit">
    <text evidence="1">The RNAP catalytic core consists of 2 alpha, 1 beta, 1 beta' and 1 omega subunit. When a sigma factor is associated with the core the holoenzyme is formed, which can initiate transcription.</text>
</comment>
<comment type="similarity">
    <text evidence="1">Belongs to the RNA polymerase subunit omega family.</text>
</comment>
<organism>
    <name type="scientific">Methylocella silvestris (strain DSM 15510 / CIP 108128 / LMG 27833 / NCIMB 13906 / BL2)</name>
    <dbReference type="NCBI Taxonomy" id="395965"/>
    <lineage>
        <taxon>Bacteria</taxon>
        <taxon>Pseudomonadati</taxon>
        <taxon>Pseudomonadota</taxon>
        <taxon>Alphaproteobacteria</taxon>
        <taxon>Hyphomicrobiales</taxon>
        <taxon>Beijerinckiaceae</taxon>
        <taxon>Methylocella</taxon>
    </lineage>
</organism>